<feature type="chain" id="PRO_0000174072" description="Pesticidal crystal protein Cry7Aa">
    <location>
        <begin position="1"/>
        <end position="1138"/>
    </location>
</feature>
<name>CR7AA_BACTU</name>
<comment type="function">
    <text>Promotes colloidosmotic lysis by binding to the midgut epithelial cells of Coleoptera. This protein is not toxic in its natural form. It is highly toxic to Colorado potato beetle larvae after an in vitro solubilization and trypsin activation step.</text>
</comment>
<comment type="developmental stage">
    <text>The crystal protein is produced during sporulation and is accumulated both as an inclusion and as part of the spore coat.</text>
</comment>
<comment type="miscellaneous">
    <text>Toxic segment of the protein is located in the N-terminus.</text>
</comment>
<comment type="similarity">
    <text evidence="1">Belongs to the delta endotoxin family.</text>
</comment>
<protein>
    <recommendedName>
        <fullName>Pesticidal crystal protein Cry7Aa</fullName>
    </recommendedName>
    <alternativeName>
        <fullName>129 kDa crystal protein</fullName>
    </alternativeName>
    <alternativeName>
        <fullName>Crystaline entomocidal protoxin</fullName>
    </alternativeName>
    <alternativeName>
        <fullName>Insecticidal delta-endotoxin CryVIIA(a)</fullName>
    </alternativeName>
</protein>
<sequence length="1138" mass="129392">MNLNNLDGYEDSNRTLNNSLNYPTQKALSPSLKNMNYQDFLSITEREQPEALASGNTAINTVVSVTGATLSALGVPGASFITNFYLKIAGLLWPENGKIWDEFMTEVEALIDQKIEEYVRNKAIAELDGLGSALDKYQKALADWLGKQDDPEAILSVATEFRIIDSLFEFSMPSFKVTGYEIPLLTVYAQAANLHLALLRDSTLYGDKWGFTQNNIEENYNRQKKRISEYSDHCTKWYNSGLSRLNGSTYEQWINYNRFRREMILMALDLVAVFPFHDPRRYSMETSTQLTREVYTDPVSLSISNPDIGPSFSQMENTAIRTPHLVDYLDELYIYTSKYKAFSHEIQPDLFYWSAHKVSFKKSEQSNLYTTGIYGKTSGYISSGAYSFHGNDIYRTLAAPSVVVYPYTQNYGVEQVEFYGVKGHVHYRGDNKYDLTYDSIDQLPPDGEPIHEKYTHRLCHATAIFKSTPDYDNATIPIFSWTHRSAEYYNRIYPNKITKIPAVKMYKLDDPSTVVKGPGFTGGDLVKRGSTGYIGDIKATVNSPLSQKYRVRVRYATNVSGQFNVYINDKITLQTKFQNTVETIGEGKDLTYGSFGYIEYSTTIQFPDEHPKITLHLSDLSNNSSFYVDSIEFIPVDVNYAEKEKLEKAQKAVNTLFTEGRNALQKDVTDYKVDQVSILVDCISGDLYPNEKRELQNLVKYAKRLSYSRNLLLDPTFDSINSSEENGWYGSNGIVIGNGDFVFKGNYLIFSGTNDTQYPTYLYQKIDESKLKEYTRYKLKGFIESSQDLEAYVIRYDAKHRTLDVSDNLLPDILPENTCGEPNRCAAQQYLDENPSPECSSMQDGILSDSHSFSLNIDTGSINHNENLGIWVLFKISTLEGYAKFGNLEVIEDGPVIGEALARVKRQETKWRNKLAQLTTETQAIYTRAKQALDNLFANAQDSHLKRDVTFAEIAAARKIVQSIREAYMSWLSVVPGVNHPIFTELSGRVQRAFQLYDVRNVVRNGRFLNGLSDWIVTSDVKVQEENGNNVLVLNNWDAQVLQNVKLYQDRGYILHVTARKIGIGEGYITITDEEGHTDQLRFTACEEIDASNAFISGYITKELEFFPDTEKVHIEIGETEGIFLVESIELFLMEELC</sequence>
<organism>
    <name type="scientific">Bacillus thuringiensis</name>
    <dbReference type="NCBI Taxonomy" id="1428"/>
    <lineage>
        <taxon>Bacteria</taxon>
        <taxon>Bacillati</taxon>
        <taxon>Bacillota</taxon>
        <taxon>Bacilli</taxon>
        <taxon>Bacillales</taxon>
        <taxon>Bacillaceae</taxon>
        <taxon>Bacillus</taxon>
        <taxon>Bacillus cereus group</taxon>
    </lineage>
</organism>
<accession>Q03749</accession>
<keyword id="KW-0749">Sporulation</keyword>
<keyword id="KW-0800">Toxin</keyword>
<keyword id="KW-0843">Virulence</keyword>
<reference key="1">
    <citation type="journal article" date="1992" name="Appl. Environ. Microbiol.">
        <title>Novel Bacillus thuringiensis insecticidal crystal protein with a silent activity against coleopteran larvae.</title>
        <authorList>
            <person name="Lambert B."/>
            <person name="Hofte H."/>
            <person name="Annys K."/>
            <person name="Jansens S."/>
            <person name="Soetaert P."/>
            <person name="Peferoen M."/>
        </authorList>
    </citation>
    <scope>NUCLEOTIDE SEQUENCE [GENOMIC DNA]</scope>
</reference>
<proteinExistence type="evidence at transcript level"/>
<dbReference type="EMBL" id="M64478">
    <property type="protein sequence ID" value="AAA22351.1"/>
    <property type="molecule type" value="Genomic_DNA"/>
</dbReference>
<dbReference type="PIR" id="A48944">
    <property type="entry name" value="A48944"/>
</dbReference>
<dbReference type="SMR" id="Q03749"/>
<dbReference type="GO" id="GO:0005102">
    <property type="term" value="F:signaling receptor binding"/>
    <property type="evidence" value="ECO:0007669"/>
    <property type="project" value="InterPro"/>
</dbReference>
<dbReference type="GO" id="GO:0090729">
    <property type="term" value="F:toxin activity"/>
    <property type="evidence" value="ECO:0007669"/>
    <property type="project" value="UniProtKB-KW"/>
</dbReference>
<dbReference type="GO" id="GO:0030435">
    <property type="term" value="P:sporulation resulting in formation of a cellular spore"/>
    <property type="evidence" value="ECO:0007669"/>
    <property type="project" value="UniProtKB-KW"/>
</dbReference>
<dbReference type="GO" id="GO:0001907">
    <property type="term" value="P:symbiont-mediated killing of host cell"/>
    <property type="evidence" value="ECO:0007669"/>
    <property type="project" value="InterPro"/>
</dbReference>
<dbReference type="CDD" id="cd04085">
    <property type="entry name" value="delta_endotoxin_C"/>
    <property type="match status" value="1"/>
</dbReference>
<dbReference type="Gene3D" id="2.60.120.260">
    <property type="entry name" value="Galactose-binding domain-like"/>
    <property type="match status" value="1"/>
</dbReference>
<dbReference type="Gene3D" id="2.100.10.10">
    <property type="entry name" value="Pesticidal crystal protein, central domain"/>
    <property type="match status" value="1"/>
</dbReference>
<dbReference type="Gene3D" id="1.20.190.10">
    <property type="entry name" value="Pesticidal crystal protein, N-terminal domain"/>
    <property type="match status" value="1"/>
</dbReference>
<dbReference type="InterPro" id="IPR048645">
    <property type="entry name" value="Cry1Ac-like_dom-VII"/>
</dbReference>
<dbReference type="InterPro" id="IPR041587">
    <property type="entry name" value="Cry_V"/>
</dbReference>
<dbReference type="InterPro" id="IPR008979">
    <property type="entry name" value="Galactose-bd-like_sf"/>
</dbReference>
<dbReference type="InterPro" id="IPR038979">
    <property type="entry name" value="Pest_crys"/>
</dbReference>
<dbReference type="InterPro" id="IPR005638">
    <property type="entry name" value="Pest_crys_dom-III"/>
</dbReference>
<dbReference type="InterPro" id="IPR005639">
    <property type="entry name" value="Pest_crys_dom_I"/>
</dbReference>
<dbReference type="InterPro" id="IPR036716">
    <property type="entry name" value="Pest_crys_N_sf"/>
</dbReference>
<dbReference type="InterPro" id="IPR036399">
    <property type="entry name" value="Pest_cryst_cen_dom_sf"/>
</dbReference>
<dbReference type="InterPro" id="IPR001178">
    <property type="entry name" value="Pest_cryst_dom_II"/>
</dbReference>
<dbReference type="PANTHER" id="PTHR37003">
    <property type="entry name" value="ENDOTOXIN_N DOMAIN-CONTAINING PROTEIN-RELATED"/>
    <property type="match status" value="1"/>
</dbReference>
<dbReference type="PANTHER" id="PTHR37003:SF2">
    <property type="entry name" value="PESTICIDAL CRYSTAL PROTEIN N-TERMINAL DOMAIN-CONTAINING PROTEIN"/>
    <property type="match status" value="1"/>
</dbReference>
<dbReference type="Pfam" id="PF17997">
    <property type="entry name" value="Cry1Ac_D5"/>
    <property type="match status" value="1"/>
</dbReference>
<dbReference type="Pfam" id="PF21463">
    <property type="entry name" value="Cry1Ac_dom-VII"/>
    <property type="match status" value="1"/>
</dbReference>
<dbReference type="Pfam" id="PF03944">
    <property type="entry name" value="Endotoxin_C"/>
    <property type="match status" value="1"/>
</dbReference>
<dbReference type="Pfam" id="PF00555">
    <property type="entry name" value="Endotoxin_M"/>
    <property type="match status" value="1"/>
</dbReference>
<dbReference type="Pfam" id="PF03945">
    <property type="entry name" value="Endotoxin_N"/>
    <property type="match status" value="1"/>
</dbReference>
<dbReference type="SUPFAM" id="SSF51096">
    <property type="entry name" value="delta-Endotoxin (insectocide), middle domain"/>
    <property type="match status" value="1"/>
</dbReference>
<dbReference type="SUPFAM" id="SSF56849">
    <property type="entry name" value="delta-Endotoxin (insectocide), N-terminal domain"/>
    <property type="match status" value="1"/>
</dbReference>
<dbReference type="SUPFAM" id="SSF49785">
    <property type="entry name" value="Galactose-binding domain-like"/>
    <property type="match status" value="2"/>
</dbReference>
<gene>
    <name type="primary">cry7Aa</name>
    <name type="synonym">cryIIIc</name>
    <name type="synonym">cryVIIA(a)</name>
</gene>
<evidence type="ECO:0000305" key="1"/>